<evidence type="ECO:0000269" key="1">
    <source>
    </source>
</evidence>
<evidence type="ECO:0000305" key="2"/>
<proteinExistence type="evidence at protein level"/>
<feature type="chain" id="PRO_0000199094" description="Allophycocyanin beta chain">
    <location>
        <begin position="1"/>
        <end position="161"/>
    </location>
</feature>
<feature type="binding site" description="covalent">
    <location>
        <position position="81"/>
    </location>
    <ligand>
        <name>(2R,3E)-phycocyanobilin</name>
        <dbReference type="ChEBI" id="CHEBI:85275"/>
    </ligand>
</feature>
<feature type="modified residue" description="N4-methylasparagine" evidence="1">
    <location>
        <position position="71"/>
    </location>
</feature>
<name>APCB_ANAVA</name>
<organism>
    <name type="scientific">Anabaena variabilis</name>
    <dbReference type="NCBI Taxonomy" id="264691"/>
    <lineage>
        <taxon>Bacteria</taxon>
        <taxon>Bacillati</taxon>
        <taxon>Cyanobacteriota</taxon>
        <taxon>Cyanophyceae</taxon>
        <taxon>Nostocales</taxon>
        <taxon>Nostocaceae</taxon>
        <taxon>Trichormus</taxon>
    </lineage>
</organism>
<reference key="1">
    <citation type="journal article" date="1981" name="J. Biol. Chem.">
        <title>The amino acid sequence of the beta subunit of allophycocyanin.</title>
        <authorList>
            <person name="Delange R.J."/>
            <person name="Williams L.C."/>
            <person name="Glazer A.N."/>
        </authorList>
    </citation>
    <scope>PROTEIN SEQUENCE</scope>
    <source>
        <strain>PCC 7118 / ATCC 27892</strain>
    </source>
</reference>
<reference key="2">
    <citation type="journal article" date="1986" name="J. Biol. Chem.">
        <title>Post-translational methylation of asparaginyl residues. Identification of beta-71 gamma-N-methylasparagine in allophycocyanin.</title>
        <authorList>
            <person name="Klotz A.V."/>
            <person name="Leary J.A."/>
            <person name="Glazer A.N."/>
        </authorList>
    </citation>
    <scope>METHYLATION AT ASN-71</scope>
</reference>
<sequence>AQDAITAVINSADVQGKYLDTAALEKLKAYFSTGELRVRAATTISANAAAIVKEAVAKSLLYSDITRPGGNMYTTRRYAACIRDLDYYLRYATYAMLAGDPSILDERVLNGLKETYNSLGVPVGATVQAIQAIKEVTASLVGAKAGKEMGIYLDYISSGLS</sequence>
<gene>
    <name type="primary">apcB</name>
</gene>
<keyword id="KW-0042">Antenna complex</keyword>
<keyword id="KW-0089">Bile pigment</keyword>
<keyword id="KW-0157">Chromophore</keyword>
<keyword id="KW-0903">Direct protein sequencing</keyword>
<keyword id="KW-0249">Electron transport</keyword>
<keyword id="KW-0472">Membrane</keyword>
<keyword id="KW-0488">Methylation</keyword>
<keyword id="KW-0602">Photosynthesis</keyword>
<keyword id="KW-0605">Phycobilisome</keyword>
<keyword id="KW-0793">Thylakoid</keyword>
<keyword id="KW-0813">Transport</keyword>
<dbReference type="PIR" id="A00328">
    <property type="entry name" value="AFAIB"/>
</dbReference>
<dbReference type="SMR" id="P00317"/>
<dbReference type="iPTMnet" id="P00317"/>
<dbReference type="GO" id="GO:0030089">
    <property type="term" value="C:phycobilisome"/>
    <property type="evidence" value="ECO:0007669"/>
    <property type="project" value="UniProtKB-KW"/>
</dbReference>
<dbReference type="GO" id="GO:0031676">
    <property type="term" value="C:plasma membrane-derived thylakoid membrane"/>
    <property type="evidence" value="ECO:0007669"/>
    <property type="project" value="UniProtKB-SubCell"/>
</dbReference>
<dbReference type="GO" id="GO:0015979">
    <property type="term" value="P:photosynthesis"/>
    <property type="evidence" value="ECO:0007669"/>
    <property type="project" value="UniProtKB-KW"/>
</dbReference>
<dbReference type="CDD" id="cd12126">
    <property type="entry name" value="APC_beta"/>
    <property type="match status" value="1"/>
</dbReference>
<dbReference type="Gene3D" id="1.10.490.20">
    <property type="entry name" value="Phycocyanins"/>
    <property type="match status" value="1"/>
</dbReference>
<dbReference type="InterPro" id="IPR006245">
    <property type="entry name" value="Allophycocyanin_b"/>
</dbReference>
<dbReference type="InterPro" id="IPR009050">
    <property type="entry name" value="Globin-like_sf"/>
</dbReference>
<dbReference type="InterPro" id="IPR012128">
    <property type="entry name" value="Phycobilisome_asu/bsu"/>
</dbReference>
<dbReference type="InterPro" id="IPR038719">
    <property type="entry name" value="Phycobilisome_asu/bsu_sf"/>
</dbReference>
<dbReference type="NCBIfam" id="TIGR01337">
    <property type="entry name" value="apcB"/>
    <property type="match status" value="1"/>
</dbReference>
<dbReference type="PANTHER" id="PTHR34011:SF3">
    <property type="entry name" value="ALLOPHYCOCYANIN BETA CHAIN"/>
    <property type="match status" value="1"/>
</dbReference>
<dbReference type="PANTHER" id="PTHR34011">
    <property type="entry name" value="PHYCOBILISOME 32.1 KDA LINKER POLYPEPTIDE, PHYCOCYANIN-ASSOCIATED, ROD 2-RELATED"/>
    <property type="match status" value="1"/>
</dbReference>
<dbReference type="Pfam" id="PF00502">
    <property type="entry name" value="Phycobilisome"/>
    <property type="match status" value="1"/>
</dbReference>
<dbReference type="PIRSF" id="PIRSF000081">
    <property type="entry name" value="Phycocyanin"/>
    <property type="match status" value="1"/>
</dbReference>
<dbReference type="SUPFAM" id="SSF46458">
    <property type="entry name" value="Globin-like"/>
    <property type="match status" value="1"/>
</dbReference>
<accession>P00317</accession>
<protein>
    <recommendedName>
        <fullName>Allophycocyanin beta chain</fullName>
    </recommendedName>
</protein>
<comment type="function">
    <text>Light-harvesting photosynthetic bile pigment-protein from the phycobiliprotein complex. Allophycocyanin has a maximum absorption at approximately 650 nanometers.</text>
</comment>
<comment type="subunit">
    <text>Heterodimer of an alpha and a beta chain.</text>
</comment>
<comment type="subcellular location">
    <subcellularLocation>
        <location>Cellular thylakoid membrane</location>
        <topology>Peripheral membrane protein</topology>
        <orientation>Cytoplasmic side</orientation>
    </subcellularLocation>
    <text>Forms the core of the phycobilisome.</text>
</comment>
<comment type="PTM">
    <text>Contains one covalently linked phycocyanobilin chromophore.</text>
</comment>
<comment type="similarity">
    <text evidence="2">Belongs to the phycobiliprotein family.</text>
</comment>